<accession>A5DEZ6</accession>
<dbReference type="EMBL" id="CH408156">
    <property type="protein sequence ID" value="EDK37749.2"/>
    <property type="molecule type" value="Genomic_DNA"/>
</dbReference>
<dbReference type="RefSeq" id="XP_001486176.1">
    <property type="nucleotide sequence ID" value="XM_001486126.1"/>
</dbReference>
<dbReference type="SMR" id="A5DEZ6"/>
<dbReference type="FunCoup" id="A5DEZ6">
    <property type="interactions" value="101"/>
</dbReference>
<dbReference type="STRING" id="294746.A5DEZ6"/>
<dbReference type="GeneID" id="5127589"/>
<dbReference type="KEGG" id="pgu:PGUG_01847"/>
<dbReference type="VEuPathDB" id="FungiDB:PGUG_01847"/>
<dbReference type="eggNOG" id="KOG4039">
    <property type="taxonomic scope" value="Eukaryota"/>
</dbReference>
<dbReference type="HOGENOM" id="CLU_071330_2_2_1"/>
<dbReference type="InParanoid" id="A5DEZ6"/>
<dbReference type="OMA" id="CIENAKA"/>
<dbReference type="OrthoDB" id="430436at2759"/>
<dbReference type="Proteomes" id="UP000001997">
    <property type="component" value="Unassembled WGS sequence"/>
</dbReference>
<dbReference type="GO" id="GO:0005741">
    <property type="term" value="C:mitochondrial outer membrane"/>
    <property type="evidence" value="ECO:0007669"/>
    <property type="project" value="UniProtKB-SubCell"/>
</dbReference>
<dbReference type="GO" id="GO:0051170">
    <property type="term" value="P:import into nucleus"/>
    <property type="evidence" value="ECO:0007669"/>
    <property type="project" value="TreeGrafter"/>
</dbReference>
<dbReference type="FunFam" id="3.40.50.720:FF:000366">
    <property type="entry name" value="Protein FMP52, mitochondrial"/>
    <property type="match status" value="1"/>
</dbReference>
<dbReference type="Gene3D" id="3.40.50.720">
    <property type="entry name" value="NAD(P)-binding Rossmann-like Domain"/>
    <property type="match status" value="1"/>
</dbReference>
<dbReference type="InterPro" id="IPR014843">
    <property type="entry name" value="Him1/Fmp52"/>
</dbReference>
<dbReference type="InterPro" id="IPR036291">
    <property type="entry name" value="NAD(P)-bd_dom_sf"/>
</dbReference>
<dbReference type="PANTHER" id="PTHR14097">
    <property type="entry name" value="OXIDOREDUCTASE HTATIP2"/>
    <property type="match status" value="1"/>
</dbReference>
<dbReference type="PANTHER" id="PTHR14097:SF7">
    <property type="entry name" value="OXIDOREDUCTASE HTATIP2"/>
    <property type="match status" value="1"/>
</dbReference>
<dbReference type="Pfam" id="PF08732">
    <property type="entry name" value="HIM1"/>
    <property type="match status" value="1"/>
</dbReference>
<dbReference type="SUPFAM" id="SSF51735">
    <property type="entry name" value="NAD(P)-binding Rossmann-fold domains"/>
    <property type="match status" value="1"/>
</dbReference>
<protein>
    <recommendedName>
        <fullName>Protein FMP52, mitochondrial</fullName>
    </recommendedName>
</protein>
<reference key="1">
    <citation type="journal article" date="2009" name="Nature">
        <title>Evolution of pathogenicity and sexual reproduction in eight Candida genomes.</title>
        <authorList>
            <person name="Butler G."/>
            <person name="Rasmussen M.D."/>
            <person name="Lin M.F."/>
            <person name="Santos M.A.S."/>
            <person name="Sakthikumar S."/>
            <person name="Munro C.A."/>
            <person name="Rheinbay E."/>
            <person name="Grabherr M."/>
            <person name="Forche A."/>
            <person name="Reedy J.L."/>
            <person name="Agrafioti I."/>
            <person name="Arnaud M.B."/>
            <person name="Bates S."/>
            <person name="Brown A.J.P."/>
            <person name="Brunke S."/>
            <person name="Costanzo M.C."/>
            <person name="Fitzpatrick D.A."/>
            <person name="de Groot P.W.J."/>
            <person name="Harris D."/>
            <person name="Hoyer L.L."/>
            <person name="Hube B."/>
            <person name="Klis F.M."/>
            <person name="Kodira C."/>
            <person name="Lennard N."/>
            <person name="Logue M.E."/>
            <person name="Martin R."/>
            <person name="Neiman A.M."/>
            <person name="Nikolaou E."/>
            <person name="Quail M.A."/>
            <person name="Quinn J."/>
            <person name="Santos M.C."/>
            <person name="Schmitzberger F.F."/>
            <person name="Sherlock G."/>
            <person name="Shah P."/>
            <person name="Silverstein K.A.T."/>
            <person name="Skrzypek M.S."/>
            <person name="Soll D."/>
            <person name="Staggs R."/>
            <person name="Stansfield I."/>
            <person name="Stumpf M.P.H."/>
            <person name="Sudbery P.E."/>
            <person name="Srikantha T."/>
            <person name="Zeng Q."/>
            <person name="Berman J."/>
            <person name="Berriman M."/>
            <person name="Heitman J."/>
            <person name="Gow N.A.R."/>
            <person name="Lorenz M.C."/>
            <person name="Birren B.W."/>
            <person name="Kellis M."/>
            <person name="Cuomo C.A."/>
        </authorList>
    </citation>
    <scope>NUCLEOTIDE SEQUENCE [LARGE SCALE GENOMIC DNA]</scope>
    <source>
        <strain>ATCC 6260 / CBS 566 / DSM 6381 / JCM 1539 / NBRC 10279 / NRRL Y-324</strain>
    </source>
</reference>
<feature type="transit peptide" description="Mitochondrion">
    <location>
        <begin position="1"/>
        <end status="unknown"/>
    </location>
</feature>
<feature type="chain" id="PRO_0000301828" description="Protein FMP52, mitochondrial">
    <location>
        <begin status="unknown"/>
        <end position="232"/>
    </location>
</feature>
<comment type="subcellular location">
    <subcellularLocation>
        <location evidence="1">Mitochondrion outer membrane</location>
        <topology evidence="1">Peripheral membrane protein</topology>
    </subcellularLocation>
</comment>
<comment type="similarity">
    <text evidence="2">Belongs to the FMP52 family.</text>
</comment>
<proteinExistence type="inferred from homology"/>
<name>FMP52_PICGU</name>
<keyword id="KW-0472">Membrane</keyword>
<keyword id="KW-0496">Mitochondrion</keyword>
<keyword id="KW-1000">Mitochondrion outer membrane</keyword>
<keyword id="KW-1185">Reference proteome</keyword>
<keyword id="KW-0809">Transit peptide</keyword>
<organism>
    <name type="scientific">Meyerozyma guilliermondii (strain ATCC 6260 / CBS 566 / DSM 6381 / JCM 1539 / NBRC 10279 / NRRL Y-324)</name>
    <name type="common">Yeast</name>
    <name type="synonym">Candida guilliermondii</name>
    <dbReference type="NCBI Taxonomy" id="294746"/>
    <lineage>
        <taxon>Eukaryota</taxon>
        <taxon>Fungi</taxon>
        <taxon>Dikarya</taxon>
        <taxon>Ascomycota</taxon>
        <taxon>Saccharomycotina</taxon>
        <taxon>Pichiomycetes</taxon>
        <taxon>Debaryomycetaceae</taxon>
        <taxon>Meyerozyma</taxon>
    </lineage>
</organism>
<evidence type="ECO:0000250" key="1"/>
<evidence type="ECO:0000305" key="2"/>
<sequence>MRAILLGSTGLVGSSALKILNECKEIDSIFTVSRRAPKVEGSKIDSVIEKDSDVWGDIIRKQKDNDVFISAFGTTKKLAGGNEGFLKIDYGINYDAAKAAKDAGVKTFVLVSSGAASSSSPFFYLKTKGKLEDDIVALKFPRTIIIRPGVLLGEREASHGFFESSLVKVASLVKNSVFAFPLYPAYDEEVAKAAIFTALEPLKSTEPEVVIVSGTEVNKTAKEYDAKYSGST</sequence>
<gene>
    <name type="primary">FMP52</name>
    <name type="ORF">PGUG_01847</name>
</gene>